<comment type="function">
    <text evidence="1">Forms an efflux pump with AaeA. Could function as a metabolic relief valve, allowing to eliminate certain compounds when they accumulate to high levels in the cell.</text>
</comment>
<comment type="subcellular location">
    <subcellularLocation>
        <location evidence="1">Cell inner membrane</location>
        <topology evidence="1">Multi-pass membrane protein</topology>
    </subcellularLocation>
</comment>
<comment type="induction">
    <text evidence="1">Positively coregulated with aaeA and aaeX by AaeR.</text>
</comment>
<comment type="similarity">
    <text evidence="1">Belongs to the aromatic acid exporter ArAE (TC 2.A.85) family.</text>
</comment>
<proteinExistence type="inferred from homology"/>
<name>AAEB_ECO8A</name>
<accession>B7M0V2</accession>
<gene>
    <name evidence="1" type="primary">aaeB</name>
    <name type="ordered locus">ECIAI1_3382</name>
</gene>
<protein>
    <recommendedName>
        <fullName evidence="1">p-hydroxybenzoic acid efflux pump subunit AaeB</fullName>
        <shortName evidence="1">pHBA efflux pump protein B</shortName>
    </recommendedName>
</protein>
<keyword id="KW-0997">Cell inner membrane</keyword>
<keyword id="KW-1003">Cell membrane</keyword>
<keyword id="KW-0472">Membrane</keyword>
<keyword id="KW-0812">Transmembrane</keyword>
<keyword id="KW-1133">Transmembrane helix</keyword>
<keyword id="KW-0813">Transport</keyword>
<sequence length="655" mass="73611">MGIFSIANQHIRFAVKLATAIVLALFVGFHFQLETPRWAVLTAAIVAAGPAFAAGGEPYSGAIRYRGFLRIIGTFIGCIAGLVIIIAMIRAPLLMILVCCIWAGFCTWISSLVRIENSYAWGLAGYTALIIVITIQPEPLLTPQFAVERCSEIVIGIVCAIMADLLFSPRSIKQEVDRELESLLVAQYQLMQLCIKHGDGEVVDKAWGDLVRRTTALQGMRSNLNMESSRWARANRRLKAINTLSLTLITQSCETYLIQNTRPELITDTFREFFDTPVETAQDVHKQLKRLRRVIAWTGERETPVTIYSWVAAATRYQLLKRGVISNTKINATEEEILQGEPEVKVESAERHHAMVNFWRTTLSCILGTLFWLWTGWTSGSGAMVMIAVVTSLAMRLPNPRMVAIDFIYGTLAALPLGLLYFLVIIPNTQQSMLLLCISLAVLGFFLGIEVQKRRLGSMGALASTINIIVLDNPMTFHFSQFLDSALGQIVGCVLAFTVILLVRDKSRDRTGRVLLNQFVSAAVSAMTTNVARRKENHLPALYQQLFLLMNKFPGDLPKFRLALTMIIAHQRLRDAPIPVNEDLSAFHRQMRRTADHVISARSDDKRRRYFGQLLEELEIYQEKLRIWQAPPQVTEPVHRLAGMLHKYQHALTDS</sequence>
<feature type="chain" id="PRO_1000146735" description="p-hydroxybenzoic acid efflux pump subunit AaeB">
    <location>
        <begin position="1"/>
        <end position="655"/>
    </location>
</feature>
<feature type="transmembrane region" description="Helical" evidence="1">
    <location>
        <begin position="13"/>
        <end position="33"/>
    </location>
</feature>
<feature type="transmembrane region" description="Helical" evidence="1">
    <location>
        <begin position="38"/>
        <end position="58"/>
    </location>
</feature>
<feature type="transmembrane region" description="Helical" evidence="1">
    <location>
        <begin position="69"/>
        <end position="89"/>
    </location>
</feature>
<feature type="transmembrane region" description="Helical" evidence="1">
    <location>
        <begin position="93"/>
        <end position="113"/>
    </location>
</feature>
<feature type="transmembrane region" description="Helical" evidence="1">
    <location>
        <begin position="121"/>
        <end position="141"/>
    </location>
</feature>
<feature type="transmembrane region" description="Helical" evidence="1">
    <location>
        <begin position="152"/>
        <end position="172"/>
    </location>
</feature>
<feature type="transmembrane region" description="Helical" evidence="1">
    <location>
        <begin position="370"/>
        <end position="390"/>
    </location>
</feature>
<feature type="transmembrane region" description="Helical" evidence="1">
    <location>
        <begin position="407"/>
        <end position="427"/>
    </location>
</feature>
<feature type="transmembrane region" description="Helical" evidence="1">
    <location>
        <begin position="431"/>
        <end position="451"/>
    </location>
</feature>
<feature type="transmembrane region" description="Helical" evidence="1">
    <location>
        <begin position="459"/>
        <end position="479"/>
    </location>
</feature>
<feature type="transmembrane region" description="Helical" evidence="1">
    <location>
        <begin position="482"/>
        <end position="502"/>
    </location>
</feature>
<evidence type="ECO:0000255" key="1">
    <source>
        <dbReference type="HAMAP-Rule" id="MF_01545"/>
    </source>
</evidence>
<dbReference type="EMBL" id="CU928160">
    <property type="protein sequence ID" value="CAR00196.1"/>
    <property type="molecule type" value="Genomic_DNA"/>
</dbReference>
<dbReference type="RefSeq" id="WP_000510962.1">
    <property type="nucleotide sequence ID" value="NC_011741.1"/>
</dbReference>
<dbReference type="SMR" id="B7M0V2"/>
<dbReference type="GeneID" id="75206090"/>
<dbReference type="KEGG" id="ecr:ECIAI1_3382"/>
<dbReference type="HOGENOM" id="CLU_027647_0_0_6"/>
<dbReference type="GO" id="GO:0005886">
    <property type="term" value="C:plasma membrane"/>
    <property type="evidence" value="ECO:0007669"/>
    <property type="project" value="UniProtKB-SubCell"/>
</dbReference>
<dbReference type="GO" id="GO:0022857">
    <property type="term" value="F:transmembrane transporter activity"/>
    <property type="evidence" value="ECO:0007669"/>
    <property type="project" value="UniProtKB-UniRule"/>
</dbReference>
<dbReference type="GO" id="GO:0046942">
    <property type="term" value="P:carboxylic acid transport"/>
    <property type="evidence" value="ECO:0007669"/>
    <property type="project" value="InterPro"/>
</dbReference>
<dbReference type="HAMAP" id="MF_01545">
    <property type="entry name" value="AaeB"/>
    <property type="match status" value="1"/>
</dbReference>
<dbReference type="InterPro" id="IPR006726">
    <property type="entry name" value="PHBA_efflux_AaeB/fusaric-R"/>
</dbReference>
<dbReference type="InterPro" id="IPR023706">
    <property type="entry name" value="PHBA_efflux_pump_AaeB"/>
</dbReference>
<dbReference type="NCBIfam" id="NF007916">
    <property type="entry name" value="PRK10631.1"/>
    <property type="match status" value="1"/>
</dbReference>
<dbReference type="PANTHER" id="PTHR30509:SF9">
    <property type="entry name" value="MULTIDRUG RESISTANCE PROTEIN MDTO"/>
    <property type="match status" value="1"/>
</dbReference>
<dbReference type="PANTHER" id="PTHR30509">
    <property type="entry name" value="P-HYDROXYBENZOIC ACID EFFLUX PUMP SUBUNIT-RELATED"/>
    <property type="match status" value="1"/>
</dbReference>
<dbReference type="Pfam" id="PF04632">
    <property type="entry name" value="FUSC"/>
    <property type="match status" value="1"/>
</dbReference>
<organism>
    <name type="scientific">Escherichia coli O8 (strain IAI1)</name>
    <dbReference type="NCBI Taxonomy" id="585034"/>
    <lineage>
        <taxon>Bacteria</taxon>
        <taxon>Pseudomonadati</taxon>
        <taxon>Pseudomonadota</taxon>
        <taxon>Gammaproteobacteria</taxon>
        <taxon>Enterobacterales</taxon>
        <taxon>Enterobacteriaceae</taxon>
        <taxon>Escherichia</taxon>
    </lineage>
</organism>
<reference key="1">
    <citation type="journal article" date="2009" name="PLoS Genet.">
        <title>Organised genome dynamics in the Escherichia coli species results in highly diverse adaptive paths.</title>
        <authorList>
            <person name="Touchon M."/>
            <person name="Hoede C."/>
            <person name="Tenaillon O."/>
            <person name="Barbe V."/>
            <person name="Baeriswyl S."/>
            <person name="Bidet P."/>
            <person name="Bingen E."/>
            <person name="Bonacorsi S."/>
            <person name="Bouchier C."/>
            <person name="Bouvet O."/>
            <person name="Calteau A."/>
            <person name="Chiapello H."/>
            <person name="Clermont O."/>
            <person name="Cruveiller S."/>
            <person name="Danchin A."/>
            <person name="Diard M."/>
            <person name="Dossat C."/>
            <person name="Karoui M.E."/>
            <person name="Frapy E."/>
            <person name="Garry L."/>
            <person name="Ghigo J.M."/>
            <person name="Gilles A.M."/>
            <person name="Johnson J."/>
            <person name="Le Bouguenec C."/>
            <person name="Lescat M."/>
            <person name="Mangenot S."/>
            <person name="Martinez-Jehanne V."/>
            <person name="Matic I."/>
            <person name="Nassif X."/>
            <person name="Oztas S."/>
            <person name="Petit M.A."/>
            <person name="Pichon C."/>
            <person name="Rouy Z."/>
            <person name="Ruf C.S."/>
            <person name="Schneider D."/>
            <person name="Tourret J."/>
            <person name="Vacherie B."/>
            <person name="Vallenet D."/>
            <person name="Medigue C."/>
            <person name="Rocha E.P.C."/>
            <person name="Denamur E."/>
        </authorList>
    </citation>
    <scope>NUCLEOTIDE SEQUENCE [LARGE SCALE GENOMIC DNA]</scope>
    <source>
        <strain>IAI1</strain>
    </source>
</reference>